<accession>Q608M7</accession>
<sequence>MIRSHEHLARKLGIPFRDPGLLRNALTHRSAEGVNNERLEFLGDSVLGFVVTEYLYQRFPSADEGVLSRLRATLVNETSLARIARELELGEYLILGSGELKSGGYRRDSILSDALEAILGAVLRDQGIDACRALILTLFERPLSALSLDDWKKDPKTRLQELMQGRGLPLPVYTLIDQSGLPHDQHFRVRCEVPLAVEPCVGEGSSRKKAEQQAAENMLSRLSDQSRFRV</sequence>
<reference key="1">
    <citation type="journal article" date="2004" name="PLoS Biol.">
        <title>Genomic insights into methanotrophy: the complete genome sequence of Methylococcus capsulatus (Bath).</title>
        <authorList>
            <person name="Ward N.L."/>
            <person name="Larsen O."/>
            <person name="Sakwa J."/>
            <person name="Bruseth L."/>
            <person name="Khouri H.M."/>
            <person name="Durkin A.S."/>
            <person name="Dimitrov G."/>
            <person name="Jiang L."/>
            <person name="Scanlan D."/>
            <person name="Kang K.H."/>
            <person name="Lewis M.R."/>
            <person name="Nelson K.E."/>
            <person name="Methe B.A."/>
            <person name="Wu M."/>
            <person name="Heidelberg J.F."/>
            <person name="Paulsen I.T."/>
            <person name="Fouts D.E."/>
            <person name="Ravel J."/>
            <person name="Tettelin H."/>
            <person name="Ren Q."/>
            <person name="Read T.D."/>
            <person name="DeBoy R.T."/>
            <person name="Seshadri R."/>
            <person name="Salzberg S.L."/>
            <person name="Jensen H.B."/>
            <person name="Birkeland N.K."/>
            <person name="Nelson W.C."/>
            <person name="Dodson R.J."/>
            <person name="Grindhaug S.H."/>
            <person name="Holt I.E."/>
            <person name="Eidhammer I."/>
            <person name="Jonasen I."/>
            <person name="Vanaken S."/>
            <person name="Utterback T.R."/>
            <person name="Feldblyum T.V."/>
            <person name="Fraser C.M."/>
            <person name="Lillehaug J.R."/>
            <person name="Eisen J.A."/>
        </authorList>
    </citation>
    <scope>NUCLEOTIDE SEQUENCE [LARGE SCALE GENOMIC DNA]</scope>
    <source>
        <strain>ATCC 33009 / NCIMB 11132 / Bath</strain>
    </source>
</reference>
<protein>
    <recommendedName>
        <fullName evidence="1">Ribonuclease 3</fullName>
        <ecNumber evidence="1">3.1.26.3</ecNumber>
    </recommendedName>
    <alternativeName>
        <fullName evidence="1">Ribonuclease III</fullName>
        <shortName evidence="1">RNase III</shortName>
    </alternativeName>
</protein>
<evidence type="ECO:0000255" key="1">
    <source>
        <dbReference type="HAMAP-Rule" id="MF_00104"/>
    </source>
</evidence>
<evidence type="ECO:0000256" key="2">
    <source>
        <dbReference type="SAM" id="MobiDB-lite"/>
    </source>
</evidence>
<dbReference type="EC" id="3.1.26.3" evidence="1"/>
<dbReference type="EMBL" id="AE017282">
    <property type="protein sequence ID" value="AAU92529.1"/>
    <property type="molecule type" value="Genomic_DNA"/>
</dbReference>
<dbReference type="RefSeq" id="WP_010960739.1">
    <property type="nucleotide sequence ID" value="NC_002977.6"/>
</dbReference>
<dbReference type="SMR" id="Q608M7"/>
<dbReference type="STRING" id="243233.MCA1463"/>
<dbReference type="GeneID" id="88223736"/>
<dbReference type="KEGG" id="mca:MCA1463"/>
<dbReference type="eggNOG" id="COG0571">
    <property type="taxonomic scope" value="Bacteria"/>
</dbReference>
<dbReference type="HOGENOM" id="CLU_000907_1_1_6"/>
<dbReference type="Proteomes" id="UP000006821">
    <property type="component" value="Chromosome"/>
</dbReference>
<dbReference type="GO" id="GO:0005737">
    <property type="term" value="C:cytoplasm"/>
    <property type="evidence" value="ECO:0007669"/>
    <property type="project" value="UniProtKB-SubCell"/>
</dbReference>
<dbReference type="GO" id="GO:0003725">
    <property type="term" value="F:double-stranded RNA binding"/>
    <property type="evidence" value="ECO:0007669"/>
    <property type="project" value="TreeGrafter"/>
</dbReference>
<dbReference type="GO" id="GO:0046872">
    <property type="term" value="F:metal ion binding"/>
    <property type="evidence" value="ECO:0007669"/>
    <property type="project" value="UniProtKB-KW"/>
</dbReference>
<dbReference type="GO" id="GO:0004525">
    <property type="term" value="F:ribonuclease III activity"/>
    <property type="evidence" value="ECO:0007669"/>
    <property type="project" value="UniProtKB-UniRule"/>
</dbReference>
<dbReference type="GO" id="GO:0019843">
    <property type="term" value="F:rRNA binding"/>
    <property type="evidence" value="ECO:0007669"/>
    <property type="project" value="UniProtKB-KW"/>
</dbReference>
<dbReference type="GO" id="GO:0006397">
    <property type="term" value="P:mRNA processing"/>
    <property type="evidence" value="ECO:0007669"/>
    <property type="project" value="UniProtKB-UniRule"/>
</dbReference>
<dbReference type="GO" id="GO:0010468">
    <property type="term" value="P:regulation of gene expression"/>
    <property type="evidence" value="ECO:0007669"/>
    <property type="project" value="TreeGrafter"/>
</dbReference>
<dbReference type="GO" id="GO:0006364">
    <property type="term" value="P:rRNA processing"/>
    <property type="evidence" value="ECO:0007669"/>
    <property type="project" value="UniProtKB-UniRule"/>
</dbReference>
<dbReference type="GO" id="GO:0008033">
    <property type="term" value="P:tRNA processing"/>
    <property type="evidence" value="ECO:0007669"/>
    <property type="project" value="UniProtKB-KW"/>
</dbReference>
<dbReference type="CDD" id="cd10845">
    <property type="entry name" value="DSRM_RNAse_III_family"/>
    <property type="match status" value="1"/>
</dbReference>
<dbReference type="CDD" id="cd00593">
    <property type="entry name" value="RIBOc"/>
    <property type="match status" value="1"/>
</dbReference>
<dbReference type="FunFam" id="1.10.1520.10:FF:000001">
    <property type="entry name" value="Ribonuclease 3"/>
    <property type="match status" value="1"/>
</dbReference>
<dbReference type="FunFam" id="3.30.160.20:FF:000003">
    <property type="entry name" value="Ribonuclease 3"/>
    <property type="match status" value="1"/>
</dbReference>
<dbReference type="Gene3D" id="3.30.160.20">
    <property type="match status" value="1"/>
</dbReference>
<dbReference type="Gene3D" id="1.10.1520.10">
    <property type="entry name" value="Ribonuclease III domain"/>
    <property type="match status" value="1"/>
</dbReference>
<dbReference type="HAMAP" id="MF_00104">
    <property type="entry name" value="RNase_III"/>
    <property type="match status" value="1"/>
</dbReference>
<dbReference type="InterPro" id="IPR014720">
    <property type="entry name" value="dsRBD_dom"/>
</dbReference>
<dbReference type="InterPro" id="IPR011907">
    <property type="entry name" value="RNase_III"/>
</dbReference>
<dbReference type="InterPro" id="IPR000999">
    <property type="entry name" value="RNase_III_dom"/>
</dbReference>
<dbReference type="InterPro" id="IPR036389">
    <property type="entry name" value="RNase_III_sf"/>
</dbReference>
<dbReference type="NCBIfam" id="TIGR02191">
    <property type="entry name" value="RNaseIII"/>
    <property type="match status" value="1"/>
</dbReference>
<dbReference type="PANTHER" id="PTHR11207:SF0">
    <property type="entry name" value="RIBONUCLEASE 3"/>
    <property type="match status" value="1"/>
</dbReference>
<dbReference type="PANTHER" id="PTHR11207">
    <property type="entry name" value="RIBONUCLEASE III"/>
    <property type="match status" value="1"/>
</dbReference>
<dbReference type="Pfam" id="PF00035">
    <property type="entry name" value="dsrm"/>
    <property type="match status" value="1"/>
</dbReference>
<dbReference type="Pfam" id="PF14622">
    <property type="entry name" value="Ribonucleas_3_3"/>
    <property type="match status" value="1"/>
</dbReference>
<dbReference type="SMART" id="SM00358">
    <property type="entry name" value="DSRM"/>
    <property type="match status" value="1"/>
</dbReference>
<dbReference type="SMART" id="SM00535">
    <property type="entry name" value="RIBOc"/>
    <property type="match status" value="1"/>
</dbReference>
<dbReference type="SUPFAM" id="SSF54768">
    <property type="entry name" value="dsRNA-binding domain-like"/>
    <property type="match status" value="1"/>
</dbReference>
<dbReference type="SUPFAM" id="SSF69065">
    <property type="entry name" value="RNase III domain-like"/>
    <property type="match status" value="1"/>
</dbReference>
<dbReference type="PROSITE" id="PS50137">
    <property type="entry name" value="DS_RBD"/>
    <property type="match status" value="1"/>
</dbReference>
<dbReference type="PROSITE" id="PS00517">
    <property type="entry name" value="RNASE_3_1"/>
    <property type="match status" value="1"/>
</dbReference>
<dbReference type="PROSITE" id="PS50142">
    <property type="entry name" value="RNASE_3_2"/>
    <property type="match status" value="1"/>
</dbReference>
<feature type="chain" id="PRO_0000228548" description="Ribonuclease 3">
    <location>
        <begin position="1"/>
        <end position="230"/>
    </location>
</feature>
<feature type="domain" description="RNase III" evidence="1">
    <location>
        <begin position="5"/>
        <end position="127"/>
    </location>
</feature>
<feature type="domain" description="DRBM" evidence="1">
    <location>
        <begin position="154"/>
        <end position="224"/>
    </location>
</feature>
<feature type="region of interest" description="Disordered" evidence="2">
    <location>
        <begin position="202"/>
        <end position="230"/>
    </location>
</feature>
<feature type="active site" evidence="1">
    <location>
        <position position="44"/>
    </location>
</feature>
<feature type="active site" evidence="1">
    <location>
        <position position="116"/>
    </location>
</feature>
<feature type="binding site" evidence="1">
    <location>
        <position position="40"/>
    </location>
    <ligand>
        <name>Mg(2+)</name>
        <dbReference type="ChEBI" id="CHEBI:18420"/>
    </ligand>
</feature>
<feature type="binding site" evidence="1">
    <location>
        <position position="113"/>
    </location>
    <ligand>
        <name>Mg(2+)</name>
        <dbReference type="ChEBI" id="CHEBI:18420"/>
    </ligand>
</feature>
<feature type="binding site" evidence="1">
    <location>
        <position position="116"/>
    </location>
    <ligand>
        <name>Mg(2+)</name>
        <dbReference type="ChEBI" id="CHEBI:18420"/>
    </ligand>
</feature>
<proteinExistence type="inferred from homology"/>
<organism>
    <name type="scientific">Methylococcus capsulatus (strain ATCC 33009 / NCIMB 11132 / Bath)</name>
    <dbReference type="NCBI Taxonomy" id="243233"/>
    <lineage>
        <taxon>Bacteria</taxon>
        <taxon>Pseudomonadati</taxon>
        <taxon>Pseudomonadota</taxon>
        <taxon>Gammaproteobacteria</taxon>
        <taxon>Methylococcales</taxon>
        <taxon>Methylococcaceae</taxon>
        <taxon>Methylococcus</taxon>
    </lineage>
</organism>
<comment type="function">
    <text evidence="1">Digests double-stranded RNA. Involved in the processing of primary rRNA transcript to yield the immediate precursors to the large and small rRNAs (23S and 16S). Processes some mRNAs, and tRNAs when they are encoded in the rRNA operon. Processes pre-crRNA and tracrRNA of type II CRISPR loci if present in the organism.</text>
</comment>
<comment type="catalytic activity">
    <reaction evidence="1">
        <text>Endonucleolytic cleavage to 5'-phosphomonoester.</text>
        <dbReference type="EC" id="3.1.26.3"/>
    </reaction>
</comment>
<comment type="cofactor">
    <cofactor evidence="1">
        <name>Mg(2+)</name>
        <dbReference type="ChEBI" id="CHEBI:18420"/>
    </cofactor>
</comment>
<comment type="subunit">
    <text evidence="1">Homodimer.</text>
</comment>
<comment type="subcellular location">
    <subcellularLocation>
        <location evidence="1">Cytoplasm</location>
    </subcellularLocation>
</comment>
<comment type="similarity">
    <text evidence="1">Belongs to the ribonuclease III family.</text>
</comment>
<keyword id="KW-0963">Cytoplasm</keyword>
<keyword id="KW-0255">Endonuclease</keyword>
<keyword id="KW-0378">Hydrolase</keyword>
<keyword id="KW-0460">Magnesium</keyword>
<keyword id="KW-0479">Metal-binding</keyword>
<keyword id="KW-0507">mRNA processing</keyword>
<keyword id="KW-0540">Nuclease</keyword>
<keyword id="KW-1185">Reference proteome</keyword>
<keyword id="KW-0694">RNA-binding</keyword>
<keyword id="KW-0698">rRNA processing</keyword>
<keyword id="KW-0699">rRNA-binding</keyword>
<keyword id="KW-0819">tRNA processing</keyword>
<gene>
    <name evidence="1" type="primary">rnc</name>
    <name type="ordered locus">MCA1463</name>
</gene>
<name>RNC_METCA</name>